<proteinExistence type="evidence at protein level"/>
<evidence type="ECO:0000250" key="1">
    <source>
        <dbReference type="UniProtKB" id="Q8WTV1"/>
    </source>
</evidence>
<evidence type="ECO:0000250" key="2">
    <source>
        <dbReference type="UniProtKB" id="Q8WY91"/>
    </source>
</evidence>
<evidence type="ECO:0000255" key="3">
    <source>
        <dbReference type="PROSITE-ProRule" id="PRU00309"/>
    </source>
</evidence>
<evidence type="ECO:0000256" key="4">
    <source>
        <dbReference type="SAM" id="MobiDB-lite"/>
    </source>
</evidence>
<evidence type="ECO:0000303" key="5">
    <source>
    </source>
</evidence>
<evidence type="ECO:0000305" key="6"/>
<evidence type="ECO:0000312" key="7">
    <source>
        <dbReference type="MGI" id="MGI:1914276"/>
    </source>
</evidence>
<organism>
    <name type="scientific">Mus musculus</name>
    <name type="common">Mouse</name>
    <dbReference type="NCBI Taxonomy" id="10090"/>
    <lineage>
        <taxon>Eukaryota</taxon>
        <taxon>Metazoa</taxon>
        <taxon>Chordata</taxon>
        <taxon>Craniata</taxon>
        <taxon>Vertebrata</taxon>
        <taxon>Euteleostomi</taxon>
        <taxon>Mammalia</taxon>
        <taxon>Eutheria</taxon>
        <taxon>Euarchontoglires</taxon>
        <taxon>Glires</taxon>
        <taxon>Rodentia</taxon>
        <taxon>Myomorpha</taxon>
        <taxon>Muroidea</taxon>
        <taxon>Muridae</taxon>
        <taxon>Murinae</taxon>
        <taxon>Mus</taxon>
        <taxon>Mus</taxon>
    </lineage>
</organism>
<accession>Q6P3Z3</accession>
<accession>Q3US28</accession>
<accession>Q6NZN6</accession>
<accession>Q6PEN6</accession>
<accession>Q91WR2</accession>
<accession>Q9CVE5</accession>
<accession>Q9CVG3</accession>
<gene>
    <name evidence="7" type="primary">Thap4</name>
</gene>
<comment type="function">
    <text evidence="2">Heme-binding protein able to scavenge peroxynitrite and to protect free L-tyrosine against peroxynitrite-mediated nitration, by acting as a peroxynitrite isomerase that converts peroxynitrite to nitrate. Therefore, this protein likely plays a role in peroxynitrite sensing and in the detoxification of reactive nitrogen and oxygen species (RNS and ROS, respectively). Is able to bind nitric oxide (NO) in vitro, but may act as a sensor of peroxynitrite levels in vivo, possibly modulating the transcriptional activity residing in the N-terminal region.</text>
</comment>
<comment type="catalytic activity">
    <reaction evidence="2">
        <text>peroxynitrite = nitrate</text>
        <dbReference type="Rhea" id="RHEA:63116"/>
        <dbReference type="ChEBI" id="CHEBI:17632"/>
        <dbReference type="ChEBI" id="CHEBI:25941"/>
    </reaction>
    <physiologicalReaction direction="left-to-right" evidence="2">
        <dbReference type="Rhea" id="RHEA:63117"/>
    </physiologicalReaction>
</comment>
<comment type="cofactor">
    <cofactor evidence="2">
        <name>heme b</name>
        <dbReference type="ChEBI" id="CHEBI:60344"/>
    </cofactor>
    <text evidence="2">Binds 1 heme b group per subunit, that coordinates a highly solvent-exposed Fe(III) atom.</text>
</comment>
<comment type="pathway">
    <text evidence="2">Nitrogen metabolism.</text>
</comment>
<comment type="subunit">
    <text evidence="2">Homodimer.</text>
</comment>
<comment type="subcellular location">
    <subcellularLocation>
        <location evidence="2">Cytoplasm</location>
    </subcellularLocation>
    <subcellularLocation>
        <location evidence="2">Nucleus</location>
    </subcellularLocation>
    <text evidence="2">Localizes mainly in the cytoplasm and partially in the nucleus.</text>
</comment>
<comment type="alternative products">
    <event type="alternative splicing"/>
    <isoform>
        <id>Q6P3Z3-1</id>
        <name>1</name>
        <sequence type="displayed"/>
    </isoform>
    <isoform>
        <id>Q6P3Z3-2</id>
        <name>2</name>
        <sequence type="described" ref="VSP_020080 VSP_020081"/>
    </isoform>
</comment>
<comment type="domain">
    <text evidence="2">The C-terminal nitrobindin region coordinates a heme and bears the isomerase activity. The N-terminal zinc finger domain likely binds DNA and may be involved in transcriptional regulation.</text>
</comment>
<comment type="similarity">
    <text evidence="6">In the C-terminal section; belongs to the nitrobindin family.</text>
</comment>
<reference key="1">
    <citation type="journal article" date="2005" name="Science">
        <title>The transcriptional landscape of the mammalian genome.</title>
        <authorList>
            <person name="Carninci P."/>
            <person name="Kasukawa T."/>
            <person name="Katayama S."/>
            <person name="Gough J."/>
            <person name="Frith M.C."/>
            <person name="Maeda N."/>
            <person name="Oyama R."/>
            <person name="Ravasi T."/>
            <person name="Lenhard B."/>
            <person name="Wells C."/>
            <person name="Kodzius R."/>
            <person name="Shimokawa K."/>
            <person name="Bajic V.B."/>
            <person name="Brenner S.E."/>
            <person name="Batalov S."/>
            <person name="Forrest A.R."/>
            <person name="Zavolan M."/>
            <person name="Davis M.J."/>
            <person name="Wilming L.G."/>
            <person name="Aidinis V."/>
            <person name="Allen J.E."/>
            <person name="Ambesi-Impiombato A."/>
            <person name="Apweiler R."/>
            <person name="Aturaliya R.N."/>
            <person name="Bailey T.L."/>
            <person name="Bansal M."/>
            <person name="Baxter L."/>
            <person name="Beisel K.W."/>
            <person name="Bersano T."/>
            <person name="Bono H."/>
            <person name="Chalk A.M."/>
            <person name="Chiu K.P."/>
            <person name="Choudhary V."/>
            <person name="Christoffels A."/>
            <person name="Clutterbuck D.R."/>
            <person name="Crowe M.L."/>
            <person name="Dalla E."/>
            <person name="Dalrymple B.P."/>
            <person name="de Bono B."/>
            <person name="Della Gatta G."/>
            <person name="di Bernardo D."/>
            <person name="Down T."/>
            <person name="Engstrom P."/>
            <person name="Fagiolini M."/>
            <person name="Faulkner G."/>
            <person name="Fletcher C.F."/>
            <person name="Fukushima T."/>
            <person name="Furuno M."/>
            <person name="Futaki S."/>
            <person name="Gariboldi M."/>
            <person name="Georgii-Hemming P."/>
            <person name="Gingeras T.R."/>
            <person name="Gojobori T."/>
            <person name="Green R.E."/>
            <person name="Gustincich S."/>
            <person name="Harbers M."/>
            <person name="Hayashi Y."/>
            <person name="Hensch T.K."/>
            <person name="Hirokawa N."/>
            <person name="Hill D."/>
            <person name="Huminiecki L."/>
            <person name="Iacono M."/>
            <person name="Ikeo K."/>
            <person name="Iwama A."/>
            <person name="Ishikawa T."/>
            <person name="Jakt M."/>
            <person name="Kanapin A."/>
            <person name="Katoh M."/>
            <person name="Kawasawa Y."/>
            <person name="Kelso J."/>
            <person name="Kitamura H."/>
            <person name="Kitano H."/>
            <person name="Kollias G."/>
            <person name="Krishnan S.P."/>
            <person name="Kruger A."/>
            <person name="Kummerfeld S.K."/>
            <person name="Kurochkin I.V."/>
            <person name="Lareau L.F."/>
            <person name="Lazarevic D."/>
            <person name="Lipovich L."/>
            <person name="Liu J."/>
            <person name="Liuni S."/>
            <person name="McWilliam S."/>
            <person name="Madan Babu M."/>
            <person name="Madera M."/>
            <person name="Marchionni L."/>
            <person name="Matsuda H."/>
            <person name="Matsuzawa S."/>
            <person name="Miki H."/>
            <person name="Mignone F."/>
            <person name="Miyake S."/>
            <person name="Morris K."/>
            <person name="Mottagui-Tabar S."/>
            <person name="Mulder N."/>
            <person name="Nakano N."/>
            <person name="Nakauchi H."/>
            <person name="Ng P."/>
            <person name="Nilsson R."/>
            <person name="Nishiguchi S."/>
            <person name="Nishikawa S."/>
            <person name="Nori F."/>
            <person name="Ohara O."/>
            <person name="Okazaki Y."/>
            <person name="Orlando V."/>
            <person name="Pang K.C."/>
            <person name="Pavan W.J."/>
            <person name="Pavesi G."/>
            <person name="Pesole G."/>
            <person name="Petrovsky N."/>
            <person name="Piazza S."/>
            <person name="Reed J."/>
            <person name="Reid J.F."/>
            <person name="Ring B.Z."/>
            <person name="Ringwald M."/>
            <person name="Rost B."/>
            <person name="Ruan Y."/>
            <person name="Salzberg S.L."/>
            <person name="Sandelin A."/>
            <person name="Schneider C."/>
            <person name="Schoenbach C."/>
            <person name="Sekiguchi K."/>
            <person name="Semple C.A."/>
            <person name="Seno S."/>
            <person name="Sessa L."/>
            <person name="Sheng Y."/>
            <person name="Shibata Y."/>
            <person name="Shimada H."/>
            <person name="Shimada K."/>
            <person name="Silva D."/>
            <person name="Sinclair B."/>
            <person name="Sperling S."/>
            <person name="Stupka E."/>
            <person name="Sugiura K."/>
            <person name="Sultana R."/>
            <person name="Takenaka Y."/>
            <person name="Taki K."/>
            <person name="Tammoja K."/>
            <person name="Tan S.L."/>
            <person name="Tang S."/>
            <person name="Taylor M.S."/>
            <person name="Tegner J."/>
            <person name="Teichmann S.A."/>
            <person name="Ueda H.R."/>
            <person name="van Nimwegen E."/>
            <person name="Verardo R."/>
            <person name="Wei C.L."/>
            <person name="Yagi K."/>
            <person name="Yamanishi H."/>
            <person name="Zabarovsky E."/>
            <person name="Zhu S."/>
            <person name="Zimmer A."/>
            <person name="Hide W."/>
            <person name="Bult C."/>
            <person name="Grimmond S.M."/>
            <person name="Teasdale R.D."/>
            <person name="Liu E.T."/>
            <person name="Brusic V."/>
            <person name="Quackenbush J."/>
            <person name="Wahlestedt C."/>
            <person name="Mattick J.S."/>
            <person name="Hume D.A."/>
            <person name="Kai C."/>
            <person name="Sasaki D."/>
            <person name="Tomaru Y."/>
            <person name="Fukuda S."/>
            <person name="Kanamori-Katayama M."/>
            <person name="Suzuki M."/>
            <person name="Aoki J."/>
            <person name="Arakawa T."/>
            <person name="Iida J."/>
            <person name="Imamura K."/>
            <person name="Itoh M."/>
            <person name="Kato T."/>
            <person name="Kawaji H."/>
            <person name="Kawagashira N."/>
            <person name="Kawashima T."/>
            <person name="Kojima M."/>
            <person name="Kondo S."/>
            <person name="Konno H."/>
            <person name="Nakano K."/>
            <person name="Ninomiya N."/>
            <person name="Nishio T."/>
            <person name="Okada M."/>
            <person name="Plessy C."/>
            <person name="Shibata K."/>
            <person name="Shiraki T."/>
            <person name="Suzuki S."/>
            <person name="Tagami M."/>
            <person name="Waki K."/>
            <person name="Watahiki A."/>
            <person name="Okamura-Oho Y."/>
            <person name="Suzuki H."/>
            <person name="Kawai J."/>
            <person name="Hayashizaki Y."/>
        </authorList>
    </citation>
    <scope>NUCLEOTIDE SEQUENCE [LARGE SCALE MRNA] (ISOFORM 1)</scope>
    <source>
        <strain>C57BL/6J</strain>
        <tissue>Embryonic head</tissue>
        <tissue>Head</tissue>
        <tissue>Small intestine</tissue>
    </source>
</reference>
<reference key="2">
    <citation type="journal article" date="2004" name="Genome Res.">
        <title>The status, quality, and expansion of the NIH full-length cDNA project: the Mammalian Gene Collection (MGC).</title>
        <authorList>
            <consortium name="The MGC Project Team"/>
        </authorList>
    </citation>
    <scope>NUCLEOTIDE SEQUENCE [LARGE SCALE MRNA] (ISOFORMS 1 AND 2)</scope>
    <source>
        <tissue>Brain</tissue>
        <tissue>Embryo</tissue>
        <tissue>Kidney</tissue>
        <tissue>Mammary tumor</tissue>
    </source>
</reference>
<reference key="3">
    <citation type="journal article" date="2010" name="Cell">
        <title>A tissue-specific atlas of mouse protein phosphorylation and expression.</title>
        <authorList>
            <person name="Huttlin E.L."/>
            <person name="Jedrychowski M.P."/>
            <person name="Elias J.E."/>
            <person name="Goswami T."/>
            <person name="Rad R."/>
            <person name="Beausoleil S.A."/>
            <person name="Villen J."/>
            <person name="Haas W."/>
            <person name="Sowa M.E."/>
            <person name="Gygi S.P."/>
        </authorList>
    </citation>
    <scope>IDENTIFICATION BY MASS SPECTROMETRY [LARGE SCALE ANALYSIS]</scope>
    <source>
        <tissue>Kidney</tissue>
    </source>
</reference>
<keyword id="KW-0025">Alternative splicing</keyword>
<keyword id="KW-0963">Cytoplasm</keyword>
<keyword id="KW-0238">DNA-binding</keyword>
<keyword id="KW-0349">Heme</keyword>
<keyword id="KW-0408">Iron</keyword>
<keyword id="KW-0413">Isomerase</keyword>
<keyword id="KW-0479">Metal-binding</keyword>
<keyword id="KW-0539">Nucleus</keyword>
<keyword id="KW-0597">Phosphoprotein</keyword>
<keyword id="KW-1185">Reference proteome</keyword>
<keyword id="KW-0862">Zinc</keyword>
<keyword id="KW-0863">Zinc-finger</keyword>
<name>THAP4_MOUSE</name>
<sequence length="569" mass="62571">MVICCAAVNCSNRQGKGEKRAVSFHRFPLKDSKRLIQWLKAVQRDNWTPTKYSFLCSEHFTKDSFSKRLEDQHRLLKPTAVPSIFHLSEKKRGAGGHGHARRKTTAAMRGHTSAETGKGTIGSSLSSSDNLMAKPESRKLKRASPQDDAAPKVTPGAVSQEQGQSLEKTPGDDPAAPLARGQEEAQASATEADHQKASSSTDAEGADKSGISMDDFTPPGSGACKFIGSLHSYSFSSKHTRERPSVPREPMDRKRLKREMEPRCSGNSVAQSPPSSSLTATPQKASQSPSAPPTDVTPKPAAEAVQSEHSDASPMSINEVILSASGACKLIDSLHSYCFSARQNKSQVCCLREQVEKKNGELKSLRQKVSRSDSQVRKLREKLDELRRASLPYLPYLSGLLPPSHEPPKLNPVVEPLSWMLGTWLSDPPGVGTFPTLQPFQYLEEVHISHVGQPMLNFSFNSFHPETHKPMHRECGFIRLKPDTNKVAFVSAQNTGIVEVEEGEVNGQELCVSSHSVSRISFAKEPHVEQITRKFRLNSEGKLEQTVSMATTTQPMTQHLHITYKKVTP</sequence>
<dbReference type="EC" id="5.99.-.-" evidence="2"/>
<dbReference type="EMBL" id="AK008304">
    <property type="protein sequence ID" value="BAB25589.1"/>
    <property type="molecule type" value="mRNA"/>
</dbReference>
<dbReference type="EMBL" id="AK008587">
    <property type="protein sequence ID" value="BAB25763.1"/>
    <property type="molecule type" value="mRNA"/>
</dbReference>
<dbReference type="EMBL" id="AK140888">
    <property type="protein sequence ID" value="BAE24509.1"/>
    <property type="molecule type" value="mRNA"/>
</dbReference>
<dbReference type="EMBL" id="AK167814">
    <property type="protein sequence ID" value="BAE39840.1"/>
    <property type="molecule type" value="mRNA"/>
</dbReference>
<dbReference type="EMBL" id="BC013538">
    <property type="protein sequence ID" value="AAH13538.2"/>
    <property type="molecule type" value="mRNA"/>
</dbReference>
<dbReference type="EMBL" id="BC057963">
    <property type="protein sequence ID" value="AAH57963.2"/>
    <property type="molecule type" value="mRNA"/>
</dbReference>
<dbReference type="EMBL" id="BC063758">
    <property type="protein sequence ID" value="AAH63758.1"/>
    <property type="molecule type" value="mRNA"/>
</dbReference>
<dbReference type="EMBL" id="BC066042">
    <property type="protein sequence ID" value="AAH66042.1"/>
    <property type="molecule type" value="mRNA"/>
</dbReference>
<dbReference type="CCDS" id="CCDS15194.1">
    <molecule id="Q6P3Z3-1"/>
</dbReference>
<dbReference type="RefSeq" id="NP_001297690.1">
    <property type="nucleotide sequence ID" value="NM_001310761.1"/>
</dbReference>
<dbReference type="RefSeq" id="NP_080196.3">
    <molecule id="Q6P3Z3-1"/>
    <property type="nucleotide sequence ID" value="NM_025920.3"/>
</dbReference>
<dbReference type="SMR" id="Q6P3Z3"/>
<dbReference type="FunCoup" id="Q6P3Z3">
    <property type="interactions" value="405"/>
</dbReference>
<dbReference type="STRING" id="10090.ENSMUSP00000140761"/>
<dbReference type="GlyGen" id="Q6P3Z3">
    <property type="glycosylation" value="1 site"/>
</dbReference>
<dbReference type="iPTMnet" id="Q6P3Z3"/>
<dbReference type="PhosphoSitePlus" id="Q6P3Z3"/>
<dbReference type="PaxDb" id="10090-ENSMUSP00000140761"/>
<dbReference type="PeptideAtlas" id="Q6P3Z3"/>
<dbReference type="ProteomicsDB" id="262768">
    <molecule id="Q6P3Z3-1"/>
</dbReference>
<dbReference type="ProteomicsDB" id="262769">
    <molecule id="Q6P3Z3-2"/>
</dbReference>
<dbReference type="Pumba" id="Q6P3Z3"/>
<dbReference type="Antibodypedia" id="34568">
    <property type="antibodies" value="77 antibodies from 23 providers"/>
</dbReference>
<dbReference type="DNASU" id="67026"/>
<dbReference type="Ensembl" id="ENSMUST00000112905.4">
    <molecule id="Q6P3Z3-2"/>
    <property type="protein sequence ID" value="ENSMUSP00000108526.4"/>
    <property type="gene ID" value="ENSMUSG00000026279.15"/>
</dbReference>
<dbReference type="Ensembl" id="ENSMUST00000190116.7">
    <molecule id="Q6P3Z3-1"/>
    <property type="protein sequence ID" value="ENSMUSP00000140761.2"/>
    <property type="gene ID" value="ENSMUSG00000026279.15"/>
</dbReference>
<dbReference type="GeneID" id="67026"/>
<dbReference type="KEGG" id="mmu:67026"/>
<dbReference type="UCSC" id="uc007cef.1">
    <molecule id="Q6P3Z3-1"/>
    <property type="organism name" value="mouse"/>
</dbReference>
<dbReference type="AGR" id="MGI:1914276"/>
<dbReference type="CTD" id="51078"/>
<dbReference type="MGI" id="MGI:1914276">
    <property type="gene designation" value="Thap4"/>
</dbReference>
<dbReference type="VEuPathDB" id="HostDB:ENSMUSG00000026279"/>
<dbReference type="eggNOG" id="KOG3371">
    <property type="taxonomic scope" value="Eukaryota"/>
</dbReference>
<dbReference type="GeneTree" id="ENSGT00940000158447"/>
<dbReference type="HOGENOM" id="CLU_037087_0_0_1"/>
<dbReference type="InParanoid" id="Q6P3Z3"/>
<dbReference type="OrthoDB" id="58529at2759"/>
<dbReference type="PhylomeDB" id="Q6P3Z3"/>
<dbReference type="TreeFam" id="TF315956"/>
<dbReference type="BioGRID-ORCS" id="67026">
    <property type="hits" value="2 hits in 77 CRISPR screens"/>
</dbReference>
<dbReference type="ChiTaRS" id="Thap4">
    <property type="organism name" value="mouse"/>
</dbReference>
<dbReference type="PRO" id="PR:Q6P3Z3"/>
<dbReference type="Proteomes" id="UP000000589">
    <property type="component" value="Chromosome 1"/>
</dbReference>
<dbReference type="RNAct" id="Q6P3Z3">
    <property type="molecule type" value="protein"/>
</dbReference>
<dbReference type="Bgee" id="ENSMUSG00000026279">
    <property type="expression patterns" value="Expressed in seminiferous tubule of testis and 263 other cell types or tissues"/>
</dbReference>
<dbReference type="ExpressionAtlas" id="Q6P3Z3">
    <property type="expression patterns" value="baseline and differential"/>
</dbReference>
<dbReference type="GO" id="GO:0005829">
    <property type="term" value="C:cytosol"/>
    <property type="evidence" value="ECO:0007669"/>
    <property type="project" value="Ensembl"/>
</dbReference>
<dbReference type="GO" id="GO:0005654">
    <property type="term" value="C:nucleoplasm"/>
    <property type="evidence" value="ECO:0007669"/>
    <property type="project" value="Ensembl"/>
</dbReference>
<dbReference type="GO" id="GO:0003677">
    <property type="term" value="F:DNA binding"/>
    <property type="evidence" value="ECO:0007669"/>
    <property type="project" value="UniProtKB-KW"/>
</dbReference>
<dbReference type="GO" id="GO:0020037">
    <property type="term" value="F:heme binding"/>
    <property type="evidence" value="ECO:0007669"/>
    <property type="project" value="Ensembl"/>
</dbReference>
<dbReference type="GO" id="GO:0042802">
    <property type="term" value="F:identical protein binding"/>
    <property type="evidence" value="ECO:0007669"/>
    <property type="project" value="Ensembl"/>
</dbReference>
<dbReference type="GO" id="GO:0070026">
    <property type="term" value="F:nitric oxide binding"/>
    <property type="evidence" value="ECO:0000250"/>
    <property type="project" value="UniProtKB"/>
</dbReference>
<dbReference type="GO" id="GO:0062213">
    <property type="term" value="F:peroxynitrite isomerase activity"/>
    <property type="evidence" value="ECO:0000250"/>
    <property type="project" value="UniProtKB"/>
</dbReference>
<dbReference type="GO" id="GO:0008270">
    <property type="term" value="F:zinc ion binding"/>
    <property type="evidence" value="ECO:0007669"/>
    <property type="project" value="UniProtKB-KW"/>
</dbReference>
<dbReference type="GO" id="GO:0042126">
    <property type="term" value="P:nitrate metabolic process"/>
    <property type="evidence" value="ECO:0000250"/>
    <property type="project" value="UniProtKB"/>
</dbReference>
<dbReference type="GO" id="GO:0006570">
    <property type="term" value="P:tyrosine metabolic process"/>
    <property type="evidence" value="ECO:0000250"/>
    <property type="project" value="UniProtKB"/>
</dbReference>
<dbReference type="CDD" id="cd07828">
    <property type="entry name" value="lipocalin_heme-bd-THAP4-like"/>
    <property type="match status" value="1"/>
</dbReference>
<dbReference type="FunFam" id="2.40.128.20:FF:000014">
    <property type="entry name" value="THAP domain-containing protein 4 isoform X1"/>
    <property type="match status" value="1"/>
</dbReference>
<dbReference type="Gene3D" id="2.40.128.20">
    <property type="match status" value="1"/>
</dbReference>
<dbReference type="Gene3D" id="6.20.210.20">
    <property type="entry name" value="THAP domain"/>
    <property type="match status" value="1"/>
</dbReference>
<dbReference type="InterPro" id="IPR012674">
    <property type="entry name" value="Calycin"/>
</dbReference>
<dbReference type="InterPro" id="IPR045165">
    <property type="entry name" value="Nitrobindin"/>
</dbReference>
<dbReference type="InterPro" id="IPR014878">
    <property type="entry name" value="THAP4-like_heme-bd"/>
</dbReference>
<dbReference type="InterPro" id="IPR006612">
    <property type="entry name" value="THAP_Znf"/>
</dbReference>
<dbReference type="InterPro" id="IPR038441">
    <property type="entry name" value="THAP_Znf_sf"/>
</dbReference>
<dbReference type="PANTHER" id="PTHR15854:SF4">
    <property type="entry name" value="PEROXYNITRITE ISOMERASE THAP4"/>
    <property type="match status" value="1"/>
</dbReference>
<dbReference type="PANTHER" id="PTHR15854">
    <property type="entry name" value="THAP4 PROTEIN"/>
    <property type="match status" value="1"/>
</dbReference>
<dbReference type="Pfam" id="PF05485">
    <property type="entry name" value="THAP"/>
    <property type="match status" value="1"/>
</dbReference>
<dbReference type="Pfam" id="PF08768">
    <property type="entry name" value="THAP4_heme-bd"/>
    <property type="match status" value="1"/>
</dbReference>
<dbReference type="SMART" id="SM00692">
    <property type="entry name" value="DM3"/>
    <property type="match status" value="1"/>
</dbReference>
<dbReference type="SMART" id="SM00980">
    <property type="entry name" value="THAP"/>
    <property type="match status" value="1"/>
</dbReference>
<dbReference type="SUPFAM" id="SSF57716">
    <property type="entry name" value="Glucocorticoid receptor-like (DNA-binding domain)"/>
    <property type="match status" value="1"/>
</dbReference>
<dbReference type="SUPFAM" id="SSF50814">
    <property type="entry name" value="Lipocalins"/>
    <property type="match status" value="1"/>
</dbReference>
<dbReference type="PROSITE" id="PS50950">
    <property type="entry name" value="ZF_THAP"/>
    <property type="match status" value="1"/>
</dbReference>
<feature type="chain" id="PRO_0000247858" description="Peroxynitrite isomerase THAP4">
    <location>
        <begin position="1"/>
        <end position="569"/>
    </location>
</feature>
<feature type="zinc finger region" description="THAP-type" evidence="3">
    <location>
        <begin position="1"/>
        <end position="85"/>
    </location>
</feature>
<feature type="region of interest" description="Disordered" evidence="4">
    <location>
        <begin position="88"/>
        <end position="216"/>
    </location>
</feature>
<feature type="region of interest" description="Disordered" evidence="4">
    <location>
        <begin position="235"/>
        <end position="312"/>
    </location>
</feature>
<feature type="region of interest" description="Nitrobindin" evidence="2">
    <location>
        <begin position="407"/>
        <end position="569"/>
    </location>
</feature>
<feature type="short sequence motif" description="HCFC1-binding motif (HBM)" evidence="1">
    <location>
        <begin position="230"/>
        <end position="233"/>
    </location>
</feature>
<feature type="compositionally biased region" description="Polar residues" evidence="4">
    <location>
        <begin position="121"/>
        <end position="130"/>
    </location>
</feature>
<feature type="compositionally biased region" description="Polar residues" evidence="4">
    <location>
        <begin position="157"/>
        <end position="167"/>
    </location>
</feature>
<feature type="compositionally biased region" description="Basic and acidic residues" evidence="4">
    <location>
        <begin position="242"/>
        <end position="262"/>
    </location>
</feature>
<feature type="compositionally biased region" description="Polar residues" evidence="4">
    <location>
        <begin position="265"/>
        <end position="279"/>
    </location>
</feature>
<feature type="compositionally biased region" description="Low complexity" evidence="4">
    <location>
        <begin position="280"/>
        <end position="289"/>
    </location>
</feature>
<feature type="binding site" evidence="2">
    <location>
        <position position="436"/>
    </location>
    <ligand>
        <name>heme b</name>
        <dbReference type="ChEBI" id="CHEBI:60344"/>
    </ligand>
</feature>
<feature type="binding site" description="axial binding residue" evidence="2">
    <location>
        <position position="559"/>
    </location>
    <ligand>
        <name>heme b</name>
        <dbReference type="ChEBI" id="CHEBI:60344"/>
    </ligand>
    <ligandPart>
        <name>Fe</name>
        <dbReference type="ChEBI" id="CHEBI:18248"/>
    </ligandPart>
</feature>
<feature type="modified residue" description="Phosphoserine" evidence="2">
    <location>
        <position position="159"/>
    </location>
</feature>
<feature type="modified residue" description="Phosphoserine" evidence="2">
    <location>
        <position position="234"/>
    </location>
</feature>
<feature type="splice variant" id="VSP_020080" description="In isoform 2." evidence="5">
    <original>VRKL</original>
    <variation>SLPS</variation>
    <location>
        <begin position="376"/>
        <end position="379"/>
    </location>
</feature>
<feature type="splice variant" id="VSP_020081" description="In isoform 2." evidence="5">
    <location>
        <begin position="380"/>
        <end position="569"/>
    </location>
</feature>
<feature type="sequence conflict" description="In Ref. 2; AAH57963." evidence="6" ref="2">
    <original>P</original>
    <variation>L</variation>
    <location>
        <position position="145"/>
    </location>
</feature>
<feature type="sequence conflict" description="In Ref. 1; BAE24509." evidence="6" ref="1">
    <original>T</original>
    <variation>S</variation>
    <location>
        <position position="532"/>
    </location>
</feature>
<feature type="sequence conflict" description="In Ref. 1; BAB25589/BAB25763." evidence="6" ref="1">
    <original>T</original>
    <variation>N</variation>
    <location>
        <position position="551"/>
    </location>
</feature>
<protein>
    <recommendedName>
        <fullName evidence="6">Peroxynitrite isomerase THAP4</fullName>
        <ecNumber evidence="2">5.99.-.-</ecNumber>
    </recommendedName>
    <alternativeName>
        <fullName evidence="6">Ferric nitrobindin</fullName>
        <shortName evidence="6">Nb(III)</shortName>
    </alternativeName>
    <alternativeName>
        <fullName evidence="7">THAP domain-containing protein 4</fullName>
    </alternativeName>
</protein>